<name>SYA_BRUSU</name>
<dbReference type="EC" id="6.1.1.7" evidence="1"/>
<dbReference type="EMBL" id="AE014291">
    <property type="protein sequence ID" value="AAN30120.1"/>
    <property type="molecule type" value="Genomic_DNA"/>
</dbReference>
<dbReference type="EMBL" id="CP002997">
    <property type="protein sequence ID" value="AEM18538.1"/>
    <property type="molecule type" value="Genomic_DNA"/>
</dbReference>
<dbReference type="RefSeq" id="WP_002964330.1">
    <property type="nucleotide sequence ID" value="NZ_KN046804.1"/>
</dbReference>
<dbReference type="SMR" id="P67009"/>
<dbReference type="GeneID" id="97533555"/>
<dbReference type="KEGG" id="bms:BR1201"/>
<dbReference type="KEGG" id="bsi:BS1330_I1197"/>
<dbReference type="PATRIC" id="fig|204722.21.peg.2277"/>
<dbReference type="HOGENOM" id="CLU_004485_1_1_5"/>
<dbReference type="PhylomeDB" id="P67009"/>
<dbReference type="Proteomes" id="UP000007104">
    <property type="component" value="Chromosome I"/>
</dbReference>
<dbReference type="GO" id="GO:0005829">
    <property type="term" value="C:cytosol"/>
    <property type="evidence" value="ECO:0007669"/>
    <property type="project" value="TreeGrafter"/>
</dbReference>
<dbReference type="GO" id="GO:0004813">
    <property type="term" value="F:alanine-tRNA ligase activity"/>
    <property type="evidence" value="ECO:0007669"/>
    <property type="project" value="UniProtKB-UniRule"/>
</dbReference>
<dbReference type="GO" id="GO:0002161">
    <property type="term" value="F:aminoacyl-tRNA deacylase activity"/>
    <property type="evidence" value="ECO:0007669"/>
    <property type="project" value="TreeGrafter"/>
</dbReference>
<dbReference type="GO" id="GO:0005524">
    <property type="term" value="F:ATP binding"/>
    <property type="evidence" value="ECO:0007669"/>
    <property type="project" value="UniProtKB-UniRule"/>
</dbReference>
<dbReference type="GO" id="GO:0000049">
    <property type="term" value="F:tRNA binding"/>
    <property type="evidence" value="ECO:0007669"/>
    <property type="project" value="UniProtKB-KW"/>
</dbReference>
<dbReference type="GO" id="GO:0008270">
    <property type="term" value="F:zinc ion binding"/>
    <property type="evidence" value="ECO:0007669"/>
    <property type="project" value="UniProtKB-UniRule"/>
</dbReference>
<dbReference type="GO" id="GO:0006419">
    <property type="term" value="P:alanyl-tRNA aminoacylation"/>
    <property type="evidence" value="ECO:0007669"/>
    <property type="project" value="UniProtKB-UniRule"/>
</dbReference>
<dbReference type="GO" id="GO:0045892">
    <property type="term" value="P:negative regulation of DNA-templated transcription"/>
    <property type="evidence" value="ECO:0007669"/>
    <property type="project" value="TreeGrafter"/>
</dbReference>
<dbReference type="CDD" id="cd00673">
    <property type="entry name" value="AlaRS_core"/>
    <property type="match status" value="1"/>
</dbReference>
<dbReference type="FunFam" id="2.40.30.130:FF:000001">
    <property type="entry name" value="Alanine--tRNA ligase"/>
    <property type="match status" value="1"/>
</dbReference>
<dbReference type="FunFam" id="3.10.310.40:FF:000001">
    <property type="entry name" value="Alanine--tRNA ligase"/>
    <property type="match status" value="1"/>
</dbReference>
<dbReference type="FunFam" id="3.30.54.20:FF:000001">
    <property type="entry name" value="Alanine--tRNA ligase"/>
    <property type="match status" value="1"/>
</dbReference>
<dbReference type="FunFam" id="3.30.930.10:FF:000004">
    <property type="entry name" value="Alanine--tRNA ligase"/>
    <property type="match status" value="1"/>
</dbReference>
<dbReference type="FunFam" id="3.30.980.10:FF:000004">
    <property type="entry name" value="Alanine--tRNA ligase, cytoplasmic"/>
    <property type="match status" value="1"/>
</dbReference>
<dbReference type="Gene3D" id="2.40.30.130">
    <property type="match status" value="1"/>
</dbReference>
<dbReference type="Gene3D" id="3.10.310.40">
    <property type="match status" value="1"/>
</dbReference>
<dbReference type="Gene3D" id="3.30.54.20">
    <property type="match status" value="1"/>
</dbReference>
<dbReference type="Gene3D" id="6.10.250.550">
    <property type="match status" value="1"/>
</dbReference>
<dbReference type="Gene3D" id="3.30.930.10">
    <property type="entry name" value="Bira Bifunctional Protein, Domain 2"/>
    <property type="match status" value="1"/>
</dbReference>
<dbReference type="Gene3D" id="3.30.980.10">
    <property type="entry name" value="Threonyl-trna Synthetase, Chain A, domain 2"/>
    <property type="match status" value="1"/>
</dbReference>
<dbReference type="HAMAP" id="MF_00036_B">
    <property type="entry name" value="Ala_tRNA_synth_B"/>
    <property type="match status" value="1"/>
</dbReference>
<dbReference type="InterPro" id="IPR045864">
    <property type="entry name" value="aa-tRNA-synth_II/BPL/LPL"/>
</dbReference>
<dbReference type="InterPro" id="IPR002318">
    <property type="entry name" value="Ala-tRNA-lgiase_IIc"/>
</dbReference>
<dbReference type="InterPro" id="IPR018162">
    <property type="entry name" value="Ala-tRNA-ligase_IIc_anticod-bd"/>
</dbReference>
<dbReference type="InterPro" id="IPR018165">
    <property type="entry name" value="Ala-tRNA-synth_IIc_core"/>
</dbReference>
<dbReference type="InterPro" id="IPR018164">
    <property type="entry name" value="Ala-tRNA-synth_IIc_N"/>
</dbReference>
<dbReference type="InterPro" id="IPR050058">
    <property type="entry name" value="Ala-tRNA_ligase"/>
</dbReference>
<dbReference type="InterPro" id="IPR023033">
    <property type="entry name" value="Ala_tRNA_ligase_euk/bac"/>
</dbReference>
<dbReference type="InterPro" id="IPR003156">
    <property type="entry name" value="DHHA1_dom"/>
</dbReference>
<dbReference type="InterPro" id="IPR018163">
    <property type="entry name" value="Thr/Ala-tRNA-synth_IIc_edit"/>
</dbReference>
<dbReference type="InterPro" id="IPR009000">
    <property type="entry name" value="Transl_B-barrel_sf"/>
</dbReference>
<dbReference type="InterPro" id="IPR012947">
    <property type="entry name" value="tRNA_SAD"/>
</dbReference>
<dbReference type="NCBIfam" id="TIGR00344">
    <property type="entry name" value="alaS"/>
    <property type="match status" value="1"/>
</dbReference>
<dbReference type="PANTHER" id="PTHR11777:SF9">
    <property type="entry name" value="ALANINE--TRNA LIGASE, CYTOPLASMIC"/>
    <property type="match status" value="1"/>
</dbReference>
<dbReference type="PANTHER" id="PTHR11777">
    <property type="entry name" value="ALANYL-TRNA SYNTHETASE"/>
    <property type="match status" value="1"/>
</dbReference>
<dbReference type="Pfam" id="PF02272">
    <property type="entry name" value="DHHA1"/>
    <property type="match status" value="1"/>
</dbReference>
<dbReference type="Pfam" id="PF01411">
    <property type="entry name" value="tRNA-synt_2c"/>
    <property type="match status" value="1"/>
</dbReference>
<dbReference type="Pfam" id="PF07973">
    <property type="entry name" value="tRNA_SAD"/>
    <property type="match status" value="1"/>
</dbReference>
<dbReference type="PRINTS" id="PR00980">
    <property type="entry name" value="TRNASYNTHALA"/>
</dbReference>
<dbReference type="SMART" id="SM00863">
    <property type="entry name" value="tRNA_SAD"/>
    <property type="match status" value="1"/>
</dbReference>
<dbReference type="SUPFAM" id="SSF55681">
    <property type="entry name" value="Class II aaRS and biotin synthetases"/>
    <property type="match status" value="1"/>
</dbReference>
<dbReference type="SUPFAM" id="SSF101353">
    <property type="entry name" value="Putative anticodon-binding domain of alanyl-tRNA synthetase (AlaRS)"/>
    <property type="match status" value="1"/>
</dbReference>
<dbReference type="SUPFAM" id="SSF55186">
    <property type="entry name" value="ThrRS/AlaRS common domain"/>
    <property type="match status" value="1"/>
</dbReference>
<dbReference type="SUPFAM" id="SSF50447">
    <property type="entry name" value="Translation proteins"/>
    <property type="match status" value="1"/>
</dbReference>
<dbReference type="PROSITE" id="PS50860">
    <property type="entry name" value="AA_TRNA_LIGASE_II_ALA"/>
    <property type="match status" value="1"/>
</dbReference>
<accession>P67009</accession>
<accession>G0KAC2</accession>
<accession>Q8YHK8</accession>
<feature type="chain" id="PRO_0000075077" description="Alanine--tRNA ligase">
    <location>
        <begin position="1"/>
        <end position="885"/>
    </location>
</feature>
<feature type="binding site" evidence="1">
    <location>
        <position position="564"/>
    </location>
    <ligand>
        <name>Zn(2+)</name>
        <dbReference type="ChEBI" id="CHEBI:29105"/>
    </ligand>
</feature>
<feature type="binding site" evidence="1">
    <location>
        <position position="568"/>
    </location>
    <ligand>
        <name>Zn(2+)</name>
        <dbReference type="ChEBI" id="CHEBI:29105"/>
    </ligand>
</feature>
<feature type="binding site" evidence="1">
    <location>
        <position position="676"/>
    </location>
    <ligand>
        <name>Zn(2+)</name>
        <dbReference type="ChEBI" id="CHEBI:29105"/>
    </ligand>
</feature>
<feature type="binding site" evidence="1">
    <location>
        <position position="680"/>
    </location>
    <ligand>
        <name>Zn(2+)</name>
        <dbReference type="ChEBI" id="CHEBI:29105"/>
    </ligand>
</feature>
<organism>
    <name type="scientific">Brucella suis biovar 1 (strain 1330)</name>
    <dbReference type="NCBI Taxonomy" id="204722"/>
    <lineage>
        <taxon>Bacteria</taxon>
        <taxon>Pseudomonadati</taxon>
        <taxon>Pseudomonadota</taxon>
        <taxon>Alphaproteobacteria</taxon>
        <taxon>Hyphomicrobiales</taxon>
        <taxon>Brucellaceae</taxon>
        <taxon>Brucella/Ochrobactrum group</taxon>
        <taxon>Brucella</taxon>
    </lineage>
</organism>
<sequence length="885" mass="95586">MAGVNEIRSTFLDYFRKNGHEVVPSSPLVPRNDPTLMFTNAGMVQFKNVFTGLEHRSYNRATTSQKCVRAGGKHNDLDNVGYTARHHTFFEMLGNFSFGDYFKEDAISFAWNLITREFGLPKDKLLVTVYHTDDDAANFWKKIAGLSDDRIIRIPTSDNFWAMGDTGPCGPCSEIFYDHGDHIWGGPPGSPEEDGDRFIEIWNLVFMQFEQQTPELRIDLPRPSIDTGMGLERIAAVLQGVHDNYDIDLFKALIRASEEATGVKAEGDFRASHRVIADHLRASSFLIADGVLPSNEGRGYVLRRIMRRAMRHAQLLGAKEPLMWRLLPALIREMGQAYPELIRAESLISETLKLEETRFRKTLERGLGLLSDASENLAEGDRLDGETAFKLYDTYGFPLDLTQDALRQRGIAVDTEGFNVAMERQKAEARANWTGSGEAATETIWFGIKDKVGATEFLGYETESAEGVIASLVRDGVEVPSVREGETISVVVNQTPFYGESGGQQGDTGTISGEGFVIAVKDTQKKGEGVFVHIGEVTEGTAKAGDVVELKVDSARRTRIRSNHSATHLLHEALRETLGTHVAQKGSLVAPDRLRFDFSHPKPISAEELEAVENLANEIILQNAPVTTRLMAVDDAIAEGAMALFGEKYGDEVRVVSMGTAKHGSKAGKAYSVELCGGTHVRQTGDIGLVRIISEGGVAAGVRRLEALTGEAARLYLEEQDERVKAIASALKTTSADVLDRVNALIDERKKLERELADARKKLALGGGSSDGGSAVEAVNGVNFLGKIVTGVSPRDLKPLADEGKKQVGSGVVLFIGVGEDGKASAVAAVTEDMVGRFSAVDLVRAASAALGGAGGGGRPDMAQAGGPDGAKAADAIAAVKALIA</sequence>
<evidence type="ECO:0000255" key="1">
    <source>
        <dbReference type="HAMAP-Rule" id="MF_00036"/>
    </source>
</evidence>
<reference key="1">
    <citation type="journal article" date="2002" name="Proc. Natl. Acad. Sci. U.S.A.">
        <title>The Brucella suis genome reveals fundamental similarities between animal and plant pathogens and symbionts.</title>
        <authorList>
            <person name="Paulsen I.T."/>
            <person name="Seshadri R."/>
            <person name="Nelson K.E."/>
            <person name="Eisen J.A."/>
            <person name="Heidelberg J.F."/>
            <person name="Read T.D."/>
            <person name="Dodson R.J."/>
            <person name="Umayam L.A."/>
            <person name="Brinkac L.M."/>
            <person name="Beanan M.J."/>
            <person name="Daugherty S.C."/>
            <person name="DeBoy R.T."/>
            <person name="Durkin A.S."/>
            <person name="Kolonay J.F."/>
            <person name="Madupu R."/>
            <person name="Nelson W.C."/>
            <person name="Ayodeji B."/>
            <person name="Kraul M."/>
            <person name="Shetty J."/>
            <person name="Malek J.A."/>
            <person name="Van Aken S.E."/>
            <person name="Riedmuller S."/>
            <person name="Tettelin H."/>
            <person name="Gill S.R."/>
            <person name="White O."/>
            <person name="Salzberg S.L."/>
            <person name="Hoover D.L."/>
            <person name="Lindler L.E."/>
            <person name="Halling S.M."/>
            <person name="Boyle S.M."/>
            <person name="Fraser C.M."/>
        </authorList>
    </citation>
    <scope>NUCLEOTIDE SEQUENCE [LARGE SCALE GENOMIC DNA]</scope>
    <source>
        <strain>1330</strain>
    </source>
</reference>
<reference key="2">
    <citation type="journal article" date="2011" name="J. Bacteriol.">
        <title>Revised genome sequence of Brucella suis 1330.</title>
        <authorList>
            <person name="Tae H."/>
            <person name="Shallom S."/>
            <person name="Settlage R."/>
            <person name="Preston D."/>
            <person name="Adams L.G."/>
            <person name="Garner H.R."/>
        </authorList>
    </citation>
    <scope>NUCLEOTIDE SEQUENCE [LARGE SCALE GENOMIC DNA]</scope>
    <source>
        <strain>1330</strain>
    </source>
</reference>
<protein>
    <recommendedName>
        <fullName evidence="1">Alanine--tRNA ligase</fullName>
        <ecNumber evidence="1">6.1.1.7</ecNumber>
    </recommendedName>
    <alternativeName>
        <fullName evidence="1">Alanyl-tRNA synthetase</fullName>
        <shortName evidence="1">AlaRS</shortName>
    </alternativeName>
</protein>
<keyword id="KW-0030">Aminoacyl-tRNA synthetase</keyword>
<keyword id="KW-0067">ATP-binding</keyword>
<keyword id="KW-0963">Cytoplasm</keyword>
<keyword id="KW-0436">Ligase</keyword>
<keyword id="KW-0479">Metal-binding</keyword>
<keyword id="KW-0547">Nucleotide-binding</keyword>
<keyword id="KW-0648">Protein biosynthesis</keyword>
<keyword id="KW-0694">RNA-binding</keyword>
<keyword id="KW-0820">tRNA-binding</keyword>
<keyword id="KW-0862">Zinc</keyword>
<comment type="function">
    <text evidence="1">Catalyzes the attachment of alanine to tRNA(Ala) in a two-step reaction: alanine is first activated by ATP to form Ala-AMP and then transferred to the acceptor end of tRNA(Ala). Also edits incorrectly charged Ser-tRNA(Ala) and Gly-tRNA(Ala) via its editing domain.</text>
</comment>
<comment type="catalytic activity">
    <reaction evidence="1">
        <text>tRNA(Ala) + L-alanine + ATP = L-alanyl-tRNA(Ala) + AMP + diphosphate</text>
        <dbReference type="Rhea" id="RHEA:12540"/>
        <dbReference type="Rhea" id="RHEA-COMP:9657"/>
        <dbReference type="Rhea" id="RHEA-COMP:9923"/>
        <dbReference type="ChEBI" id="CHEBI:30616"/>
        <dbReference type="ChEBI" id="CHEBI:33019"/>
        <dbReference type="ChEBI" id="CHEBI:57972"/>
        <dbReference type="ChEBI" id="CHEBI:78442"/>
        <dbReference type="ChEBI" id="CHEBI:78497"/>
        <dbReference type="ChEBI" id="CHEBI:456215"/>
        <dbReference type="EC" id="6.1.1.7"/>
    </reaction>
</comment>
<comment type="cofactor">
    <cofactor evidence="1">
        <name>Zn(2+)</name>
        <dbReference type="ChEBI" id="CHEBI:29105"/>
    </cofactor>
    <text evidence="1">Binds 1 zinc ion per subunit.</text>
</comment>
<comment type="subcellular location">
    <subcellularLocation>
        <location evidence="1">Cytoplasm</location>
    </subcellularLocation>
</comment>
<comment type="domain">
    <text evidence="1">Consists of three domains; the N-terminal catalytic domain, the editing domain and the C-terminal C-Ala domain. The editing domain removes incorrectly charged amino acids, while the C-Ala domain, along with tRNA(Ala), serves as a bridge to cooperatively bring together the editing and aminoacylation centers thus stimulating deacylation of misacylated tRNAs.</text>
</comment>
<comment type="similarity">
    <text evidence="1">Belongs to the class-II aminoacyl-tRNA synthetase family.</text>
</comment>
<gene>
    <name evidence="1" type="primary">alaS</name>
    <name type="ordered locus">BR1201</name>
    <name type="ordered locus">BS1330_I1197</name>
</gene>
<proteinExistence type="inferred from homology"/>